<organism>
    <name type="scientific">Zymomonas mobilis subsp. mobilis (strain ATCC 31821 / ZM4 / CP4)</name>
    <dbReference type="NCBI Taxonomy" id="264203"/>
    <lineage>
        <taxon>Bacteria</taxon>
        <taxon>Pseudomonadati</taxon>
        <taxon>Pseudomonadota</taxon>
        <taxon>Alphaproteobacteria</taxon>
        <taxon>Sphingomonadales</taxon>
        <taxon>Zymomonadaceae</taxon>
        <taxon>Zymomonas</taxon>
    </lineage>
</organism>
<name>UVRC_ZYMMO</name>
<dbReference type="EMBL" id="AE008692">
    <property type="protein sequence ID" value="AAV89296.1"/>
    <property type="molecule type" value="Genomic_DNA"/>
</dbReference>
<dbReference type="SMR" id="Q5NPR4"/>
<dbReference type="STRING" id="264203.ZMO0672"/>
<dbReference type="KEGG" id="zmo:ZMO0672"/>
<dbReference type="eggNOG" id="COG0322">
    <property type="taxonomic scope" value="Bacteria"/>
</dbReference>
<dbReference type="HOGENOM" id="CLU_014841_3_0_5"/>
<dbReference type="Proteomes" id="UP000001173">
    <property type="component" value="Chromosome"/>
</dbReference>
<dbReference type="GO" id="GO:0005737">
    <property type="term" value="C:cytoplasm"/>
    <property type="evidence" value="ECO:0007669"/>
    <property type="project" value="UniProtKB-SubCell"/>
</dbReference>
<dbReference type="GO" id="GO:0009380">
    <property type="term" value="C:excinuclease repair complex"/>
    <property type="evidence" value="ECO:0007669"/>
    <property type="project" value="InterPro"/>
</dbReference>
<dbReference type="GO" id="GO:0003677">
    <property type="term" value="F:DNA binding"/>
    <property type="evidence" value="ECO:0007669"/>
    <property type="project" value="UniProtKB-UniRule"/>
</dbReference>
<dbReference type="GO" id="GO:0009381">
    <property type="term" value="F:excinuclease ABC activity"/>
    <property type="evidence" value="ECO:0007669"/>
    <property type="project" value="UniProtKB-UniRule"/>
</dbReference>
<dbReference type="GO" id="GO:0006289">
    <property type="term" value="P:nucleotide-excision repair"/>
    <property type="evidence" value="ECO:0007669"/>
    <property type="project" value="UniProtKB-UniRule"/>
</dbReference>
<dbReference type="GO" id="GO:0009432">
    <property type="term" value="P:SOS response"/>
    <property type="evidence" value="ECO:0007669"/>
    <property type="project" value="UniProtKB-UniRule"/>
</dbReference>
<dbReference type="CDD" id="cd10434">
    <property type="entry name" value="GIY-YIG_UvrC_Cho"/>
    <property type="match status" value="1"/>
</dbReference>
<dbReference type="FunFam" id="3.30.420.340:FF:000001">
    <property type="entry name" value="UvrABC system protein C"/>
    <property type="match status" value="1"/>
</dbReference>
<dbReference type="FunFam" id="3.40.1440.10:FF:000001">
    <property type="entry name" value="UvrABC system protein C"/>
    <property type="match status" value="1"/>
</dbReference>
<dbReference type="Gene3D" id="1.10.150.20">
    <property type="entry name" value="5' to 3' exonuclease, C-terminal subdomain"/>
    <property type="match status" value="1"/>
</dbReference>
<dbReference type="Gene3D" id="3.40.1440.10">
    <property type="entry name" value="GIY-YIG endonuclease"/>
    <property type="match status" value="1"/>
</dbReference>
<dbReference type="Gene3D" id="4.10.860.10">
    <property type="entry name" value="UVR domain"/>
    <property type="match status" value="1"/>
</dbReference>
<dbReference type="Gene3D" id="3.30.420.340">
    <property type="entry name" value="UvrC, RNAse H endonuclease domain"/>
    <property type="match status" value="1"/>
</dbReference>
<dbReference type="HAMAP" id="MF_00203">
    <property type="entry name" value="UvrC"/>
    <property type="match status" value="1"/>
</dbReference>
<dbReference type="InterPro" id="IPR000305">
    <property type="entry name" value="GIY-YIG_endonuc"/>
</dbReference>
<dbReference type="InterPro" id="IPR035901">
    <property type="entry name" value="GIY-YIG_endonuc_sf"/>
</dbReference>
<dbReference type="InterPro" id="IPR047296">
    <property type="entry name" value="GIY-YIG_UvrC_Cho"/>
</dbReference>
<dbReference type="InterPro" id="IPR003583">
    <property type="entry name" value="Hlx-hairpin-Hlx_DNA-bd_motif"/>
</dbReference>
<dbReference type="InterPro" id="IPR010994">
    <property type="entry name" value="RuvA_2-like"/>
</dbReference>
<dbReference type="InterPro" id="IPR001943">
    <property type="entry name" value="UVR_dom"/>
</dbReference>
<dbReference type="InterPro" id="IPR036876">
    <property type="entry name" value="UVR_dom_sf"/>
</dbReference>
<dbReference type="InterPro" id="IPR050066">
    <property type="entry name" value="UvrABC_protein_C"/>
</dbReference>
<dbReference type="InterPro" id="IPR004791">
    <property type="entry name" value="UvrC"/>
</dbReference>
<dbReference type="InterPro" id="IPR001162">
    <property type="entry name" value="UvrC_RNase_H_dom"/>
</dbReference>
<dbReference type="InterPro" id="IPR038476">
    <property type="entry name" value="UvrC_RNase_H_dom_sf"/>
</dbReference>
<dbReference type="NCBIfam" id="NF001824">
    <property type="entry name" value="PRK00558.1-5"/>
    <property type="match status" value="1"/>
</dbReference>
<dbReference type="NCBIfam" id="TIGR00194">
    <property type="entry name" value="uvrC"/>
    <property type="match status" value="1"/>
</dbReference>
<dbReference type="PANTHER" id="PTHR30562:SF1">
    <property type="entry name" value="UVRABC SYSTEM PROTEIN C"/>
    <property type="match status" value="1"/>
</dbReference>
<dbReference type="PANTHER" id="PTHR30562">
    <property type="entry name" value="UVRC/OXIDOREDUCTASE"/>
    <property type="match status" value="1"/>
</dbReference>
<dbReference type="Pfam" id="PF01541">
    <property type="entry name" value="GIY-YIG"/>
    <property type="match status" value="1"/>
</dbReference>
<dbReference type="Pfam" id="PF14520">
    <property type="entry name" value="HHH_5"/>
    <property type="match status" value="1"/>
</dbReference>
<dbReference type="Pfam" id="PF02151">
    <property type="entry name" value="UVR"/>
    <property type="match status" value="1"/>
</dbReference>
<dbReference type="Pfam" id="PF22920">
    <property type="entry name" value="UvrC_RNaseH"/>
    <property type="match status" value="1"/>
</dbReference>
<dbReference type="Pfam" id="PF08459">
    <property type="entry name" value="UvrC_RNaseH_dom"/>
    <property type="match status" value="1"/>
</dbReference>
<dbReference type="SMART" id="SM00465">
    <property type="entry name" value="GIYc"/>
    <property type="match status" value="1"/>
</dbReference>
<dbReference type="SMART" id="SM00278">
    <property type="entry name" value="HhH1"/>
    <property type="match status" value="2"/>
</dbReference>
<dbReference type="SUPFAM" id="SSF46600">
    <property type="entry name" value="C-terminal UvrC-binding domain of UvrB"/>
    <property type="match status" value="1"/>
</dbReference>
<dbReference type="SUPFAM" id="SSF82771">
    <property type="entry name" value="GIY-YIG endonuclease"/>
    <property type="match status" value="1"/>
</dbReference>
<dbReference type="SUPFAM" id="SSF47781">
    <property type="entry name" value="RuvA domain 2-like"/>
    <property type="match status" value="1"/>
</dbReference>
<dbReference type="PROSITE" id="PS50164">
    <property type="entry name" value="GIY_YIG"/>
    <property type="match status" value="1"/>
</dbReference>
<dbReference type="PROSITE" id="PS50151">
    <property type="entry name" value="UVR"/>
    <property type="match status" value="1"/>
</dbReference>
<dbReference type="PROSITE" id="PS50165">
    <property type="entry name" value="UVRC"/>
    <property type="match status" value="1"/>
</dbReference>
<evidence type="ECO:0000255" key="1">
    <source>
        <dbReference type="HAMAP-Rule" id="MF_00203"/>
    </source>
</evidence>
<reference key="1">
    <citation type="journal article" date="2005" name="Nat. Biotechnol.">
        <title>The genome sequence of the ethanologenic bacterium Zymomonas mobilis ZM4.</title>
        <authorList>
            <person name="Seo J.-S."/>
            <person name="Chong H."/>
            <person name="Park H.S."/>
            <person name="Yoon K.-O."/>
            <person name="Jung C."/>
            <person name="Kim J.J."/>
            <person name="Hong J.H."/>
            <person name="Kim H."/>
            <person name="Kim J.-H."/>
            <person name="Kil J.-I."/>
            <person name="Park C.J."/>
            <person name="Oh H.-M."/>
            <person name="Lee J.-S."/>
            <person name="Jin S.-J."/>
            <person name="Um H.-W."/>
            <person name="Lee H.-J."/>
            <person name="Oh S.-J."/>
            <person name="Kim J.Y."/>
            <person name="Kang H.L."/>
            <person name="Lee S.Y."/>
            <person name="Lee K.J."/>
            <person name="Kang H.S."/>
        </authorList>
    </citation>
    <scope>NUCLEOTIDE SEQUENCE [LARGE SCALE GENOMIC DNA]</scope>
    <source>
        <strain>ATCC 31821 / ZM4 / CP4</strain>
    </source>
</reference>
<proteinExistence type="inferred from homology"/>
<comment type="function">
    <text evidence="1">The UvrABC repair system catalyzes the recognition and processing of DNA lesions. UvrC both incises the 5' and 3' sides of the lesion. The N-terminal half is responsible for the 3' incision and the C-terminal half is responsible for the 5' incision.</text>
</comment>
<comment type="subunit">
    <text evidence="1">Interacts with UvrB in an incision complex.</text>
</comment>
<comment type="subcellular location">
    <subcellularLocation>
        <location evidence="1">Cytoplasm</location>
    </subcellularLocation>
</comment>
<comment type="similarity">
    <text evidence="1">Belongs to the UvrC family.</text>
</comment>
<sequence length="664" mass="75703">MISKIVLKSFFKTRWMRHDLNNESQETDRFSEKQTLDVFKGTDHPDLEKGVAAIGNVLKTLPLRPGVYRMYDSKGNILYVGKARALRNRVANYTQISGLSRRIQRMVSQTRSMTIVTTVTESEALLLEAQLIKRYRPPYNILLRDDKSFPYILLKEDGTFPQFPSLQRHRGVKRAKGKYYGPFASADSVTLTLNSLQKLFLLRSCSDSFFRNRKRPCLLYQIKRCSAPCVGRISEDDYRDLAVDTRDFLAGKSTHVQKKLVTAMEQASNDLNYELAAVYRDRLKALAFIQSHQSINSGNLRNADIFGIECRAGLACIQVFFIRNRQNWGHHAYYLNHIDEQPLEDVMQSFLGQFYEDKIAPKDILTNYLPSDKNVLEDALSSQRDYRVKFYQPQRGELKKLVDQAVRNAKEAIDRRLAEASTQKQLLKEMVNLFHLDKIPDRIEVYDNSHIMGSNMVGGMIVAGPEGFRRNSYRKFNIKSPSINPGDDFEMMREVLTRRFSRLERSDPDHSSSEWPDLLLIDGGKGQVHAVKDILAEQGISDIAIVGISKGPDRNAGREHFHLVDGSEYALPPNSGLLFYLQRLRDEAHRFAIGTHRAKRAKNLTSSPLDEVPGIGPSRKKALLLHFGTARDVKNASLSELEKVNGISSAIARQIYDFFHHSPA</sequence>
<protein>
    <recommendedName>
        <fullName evidence="1">UvrABC system protein C</fullName>
        <shortName evidence="1">Protein UvrC</shortName>
    </recommendedName>
    <alternativeName>
        <fullName evidence="1">Excinuclease ABC subunit C</fullName>
    </alternativeName>
</protein>
<gene>
    <name evidence="1" type="primary">uvrC</name>
    <name type="ordered locus">ZMO0672</name>
</gene>
<keyword id="KW-0963">Cytoplasm</keyword>
<keyword id="KW-0227">DNA damage</keyword>
<keyword id="KW-0228">DNA excision</keyword>
<keyword id="KW-0234">DNA repair</keyword>
<keyword id="KW-0267">Excision nuclease</keyword>
<keyword id="KW-1185">Reference proteome</keyword>
<keyword id="KW-0742">SOS response</keyword>
<feature type="chain" id="PRO_0000227497" description="UvrABC system protein C">
    <location>
        <begin position="1"/>
        <end position="664"/>
    </location>
</feature>
<feature type="domain" description="GIY-YIG" evidence="1">
    <location>
        <begin position="63"/>
        <end position="141"/>
    </location>
</feature>
<feature type="domain" description="UVR" evidence="1">
    <location>
        <begin position="254"/>
        <end position="289"/>
    </location>
</feature>
<accession>Q5NPR4</accession>